<proteinExistence type="inferred from homology"/>
<gene>
    <name evidence="1" type="primary">rpoA</name>
    <name type="ordered locus">KPN78578_36580</name>
    <name type="ORF">KPN_03695</name>
</gene>
<keyword id="KW-0240">DNA-directed RNA polymerase</keyword>
<keyword id="KW-0548">Nucleotidyltransferase</keyword>
<keyword id="KW-0804">Transcription</keyword>
<keyword id="KW-0808">Transferase</keyword>
<name>RPOA_KLEP7</name>
<dbReference type="EC" id="2.7.7.6" evidence="1"/>
<dbReference type="EMBL" id="CP000647">
    <property type="protein sequence ID" value="ABR79082.1"/>
    <property type="molecule type" value="Genomic_DNA"/>
</dbReference>
<dbReference type="RefSeq" id="WP_002919219.1">
    <property type="nucleotide sequence ID" value="NC_009648.1"/>
</dbReference>
<dbReference type="SMR" id="A6TEU8"/>
<dbReference type="STRING" id="272620.KPN_03695"/>
<dbReference type="jPOST" id="A6TEU8"/>
<dbReference type="PaxDb" id="272620-KPN_03695"/>
<dbReference type="EnsemblBacteria" id="ABR79082">
    <property type="protein sequence ID" value="ABR79082"/>
    <property type="gene ID" value="KPN_03695"/>
</dbReference>
<dbReference type="GeneID" id="98390417"/>
<dbReference type="KEGG" id="kpn:KPN_03695"/>
<dbReference type="HOGENOM" id="CLU_053084_0_0_6"/>
<dbReference type="Proteomes" id="UP000000265">
    <property type="component" value="Chromosome"/>
</dbReference>
<dbReference type="GO" id="GO:0005737">
    <property type="term" value="C:cytoplasm"/>
    <property type="evidence" value="ECO:0007669"/>
    <property type="project" value="UniProtKB-ARBA"/>
</dbReference>
<dbReference type="GO" id="GO:0000428">
    <property type="term" value="C:DNA-directed RNA polymerase complex"/>
    <property type="evidence" value="ECO:0007669"/>
    <property type="project" value="UniProtKB-KW"/>
</dbReference>
<dbReference type="GO" id="GO:0003677">
    <property type="term" value="F:DNA binding"/>
    <property type="evidence" value="ECO:0007669"/>
    <property type="project" value="UniProtKB-UniRule"/>
</dbReference>
<dbReference type="GO" id="GO:0003899">
    <property type="term" value="F:DNA-directed RNA polymerase activity"/>
    <property type="evidence" value="ECO:0007669"/>
    <property type="project" value="UniProtKB-UniRule"/>
</dbReference>
<dbReference type="GO" id="GO:0046983">
    <property type="term" value="F:protein dimerization activity"/>
    <property type="evidence" value="ECO:0007669"/>
    <property type="project" value="InterPro"/>
</dbReference>
<dbReference type="GO" id="GO:0006351">
    <property type="term" value="P:DNA-templated transcription"/>
    <property type="evidence" value="ECO:0007669"/>
    <property type="project" value="UniProtKB-UniRule"/>
</dbReference>
<dbReference type="CDD" id="cd06928">
    <property type="entry name" value="RNAP_alpha_NTD"/>
    <property type="match status" value="1"/>
</dbReference>
<dbReference type="FunFam" id="1.10.150.20:FF:000001">
    <property type="entry name" value="DNA-directed RNA polymerase subunit alpha"/>
    <property type="match status" value="1"/>
</dbReference>
<dbReference type="FunFam" id="2.170.120.12:FF:000001">
    <property type="entry name" value="DNA-directed RNA polymerase subunit alpha"/>
    <property type="match status" value="1"/>
</dbReference>
<dbReference type="Gene3D" id="1.10.150.20">
    <property type="entry name" value="5' to 3' exonuclease, C-terminal subdomain"/>
    <property type="match status" value="1"/>
</dbReference>
<dbReference type="Gene3D" id="2.170.120.12">
    <property type="entry name" value="DNA-directed RNA polymerase, insert domain"/>
    <property type="match status" value="1"/>
</dbReference>
<dbReference type="Gene3D" id="3.30.1360.10">
    <property type="entry name" value="RNA polymerase, RBP11-like subunit"/>
    <property type="match status" value="1"/>
</dbReference>
<dbReference type="HAMAP" id="MF_00059">
    <property type="entry name" value="RNApol_bact_RpoA"/>
    <property type="match status" value="1"/>
</dbReference>
<dbReference type="InterPro" id="IPR011262">
    <property type="entry name" value="DNA-dir_RNA_pol_insert"/>
</dbReference>
<dbReference type="InterPro" id="IPR011263">
    <property type="entry name" value="DNA-dir_RNA_pol_RpoA/D/Rpb3"/>
</dbReference>
<dbReference type="InterPro" id="IPR011773">
    <property type="entry name" value="DNA-dir_RpoA"/>
</dbReference>
<dbReference type="InterPro" id="IPR036603">
    <property type="entry name" value="RBP11-like"/>
</dbReference>
<dbReference type="InterPro" id="IPR011260">
    <property type="entry name" value="RNAP_asu_C"/>
</dbReference>
<dbReference type="InterPro" id="IPR036643">
    <property type="entry name" value="RNApol_insert_sf"/>
</dbReference>
<dbReference type="NCBIfam" id="NF003513">
    <property type="entry name" value="PRK05182.1-2"/>
    <property type="match status" value="1"/>
</dbReference>
<dbReference type="NCBIfam" id="NF003519">
    <property type="entry name" value="PRK05182.2-5"/>
    <property type="match status" value="1"/>
</dbReference>
<dbReference type="NCBIfam" id="TIGR02027">
    <property type="entry name" value="rpoA"/>
    <property type="match status" value="1"/>
</dbReference>
<dbReference type="Pfam" id="PF01000">
    <property type="entry name" value="RNA_pol_A_bac"/>
    <property type="match status" value="1"/>
</dbReference>
<dbReference type="Pfam" id="PF03118">
    <property type="entry name" value="RNA_pol_A_CTD"/>
    <property type="match status" value="1"/>
</dbReference>
<dbReference type="Pfam" id="PF01193">
    <property type="entry name" value="RNA_pol_L"/>
    <property type="match status" value="1"/>
</dbReference>
<dbReference type="SMART" id="SM00662">
    <property type="entry name" value="RPOLD"/>
    <property type="match status" value="1"/>
</dbReference>
<dbReference type="SUPFAM" id="SSF47789">
    <property type="entry name" value="C-terminal domain of RNA polymerase alpha subunit"/>
    <property type="match status" value="1"/>
</dbReference>
<dbReference type="SUPFAM" id="SSF56553">
    <property type="entry name" value="Insert subdomain of RNA polymerase alpha subunit"/>
    <property type="match status" value="1"/>
</dbReference>
<dbReference type="SUPFAM" id="SSF55257">
    <property type="entry name" value="RBP11-like subunits of RNA polymerase"/>
    <property type="match status" value="1"/>
</dbReference>
<reference key="1">
    <citation type="submission" date="2006-09" db="EMBL/GenBank/DDBJ databases">
        <authorList>
            <consortium name="The Klebsiella pneumonia Genome Sequencing Project"/>
            <person name="McClelland M."/>
            <person name="Sanderson E.K."/>
            <person name="Spieth J."/>
            <person name="Clifton W.S."/>
            <person name="Latreille P."/>
            <person name="Sabo A."/>
            <person name="Pepin K."/>
            <person name="Bhonagiri V."/>
            <person name="Porwollik S."/>
            <person name="Ali J."/>
            <person name="Wilson R.K."/>
        </authorList>
    </citation>
    <scope>NUCLEOTIDE SEQUENCE [LARGE SCALE GENOMIC DNA]</scope>
    <source>
        <strain>ATCC 700721 / MGH 78578</strain>
    </source>
</reference>
<sequence length="329" mass="36466">MQGSVTEFLKPRLVDIEQVSSTHAKVTLEPLERGFGHTLGNALRRILLSSMPGCAVTEVEIDGVLHEYSTKEGVQEDILEILLNLKGLAVRVQGKDEVILTLNKSGIGPVTAADITHDGDVEIVKPQHVICHLTDENAAISMRIKVQRGRGYVPASARIHSEEDERPIGRLLVDACYSPVERIAYNVEAARVEQRTDLDKLVIEMETNGTIDPEEAIRRAATILAEQLEAFVDLRDVRQPEVKEEKPEFDPILLRPVDDLELTVRSANCLKAEAIHYIGDLVQRTEVELLKTPNLGKKSLTEIKDVLASRGLSLGMRLENWPPASIADE</sequence>
<comment type="function">
    <text evidence="1">DNA-dependent RNA polymerase catalyzes the transcription of DNA into RNA using the four ribonucleoside triphosphates as substrates.</text>
</comment>
<comment type="catalytic activity">
    <reaction evidence="1">
        <text>RNA(n) + a ribonucleoside 5'-triphosphate = RNA(n+1) + diphosphate</text>
        <dbReference type="Rhea" id="RHEA:21248"/>
        <dbReference type="Rhea" id="RHEA-COMP:14527"/>
        <dbReference type="Rhea" id="RHEA-COMP:17342"/>
        <dbReference type="ChEBI" id="CHEBI:33019"/>
        <dbReference type="ChEBI" id="CHEBI:61557"/>
        <dbReference type="ChEBI" id="CHEBI:140395"/>
        <dbReference type="EC" id="2.7.7.6"/>
    </reaction>
</comment>
<comment type="subunit">
    <text evidence="1">Homodimer. The RNAP catalytic core consists of 2 alpha, 1 beta, 1 beta' and 1 omega subunit. When a sigma factor is associated with the core the holoenzyme is formed, which can initiate transcription.</text>
</comment>
<comment type="domain">
    <text evidence="1">The N-terminal domain is essential for RNAP assembly and basal transcription, whereas the C-terminal domain is involved in interaction with transcriptional regulators and with upstream promoter elements.</text>
</comment>
<comment type="similarity">
    <text evidence="1">Belongs to the RNA polymerase alpha chain family.</text>
</comment>
<evidence type="ECO:0000255" key="1">
    <source>
        <dbReference type="HAMAP-Rule" id="MF_00059"/>
    </source>
</evidence>
<protein>
    <recommendedName>
        <fullName evidence="1">DNA-directed RNA polymerase subunit alpha</fullName>
        <shortName evidence="1">RNAP subunit alpha</shortName>
        <ecNumber evidence="1">2.7.7.6</ecNumber>
    </recommendedName>
    <alternativeName>
        <fullName evidence="1">RNA polymerase subunit alpha</fullName>
    </alternativeName>
    <alternativeName>
        <fullName evidence="1">Transcriptase subunit alpha</fullName>
    </alternativeName>
</protein>
<organism>
    <name type="scientific">Klebsiella pneumoniae subsp. pneumoniae (strain ATCC 700721 / MGH 78578)</name>
    <dbReference type="NCBI Taxonomy" id="272620"/>
    <lineage>
        <taxon>Bacteria</taxon>
        <taxon>Pseudomonadati</taxon>
        <taxon>Pseudomonadota</taxon>
        <taxon>Gammaproteobacteria</taxon>
        <taxon>Enterobacterales</taxon>
        <taxon>Enterobacteriaceae</taxon>
        <taxon>Klebsiella/Raoultella group</taxon>
        <taxon>Klebsiella</taxon>
        <taxon>Klebsiella pneumoniae complex</taxon>
    </lineage>
</organism>
<accession>A6TEU8</accession>
<feature type="chain" id="PRO_0000323638" description="DNA-directed RNA polymerase subunit alpha">
    <location>
        <begin position="1"/>
        <end position="329"/>
    </location>
</feature>
<feature type="region of interest" description="Alpha N-terminal domain (alpha-NTD)" evidence="1">
    <location>
        <begin position="1"/>
        <end position="235"/>
    </location>
</feature>
<feature type="region of interest" description="Alpha C-terminal domain (alpha-CTD)" evidence="1">
    <location>
        <begin position="249"/>
        <end position="329"/>
    </location>
</feature>